<evidence type="ECO:0000255" key="1"/>
<evidence type="ECO:0000255" key="2">
    <source>
        <dbReference type="PROSITE-ProRule" id="PRU00043"/>
    </source>
</evidence>
<evidence type="ECO:0000255" key="3">
    <source>
        <dbReference type="PROSITE-ProRule" id="PRU00159"/>
    </source>
</evidence>
<evidence type="ECO:0000255" key="4">
    <source>
        <dbReference type="PROSITE-ProRule" id="PRU10028"/>
    </source>
</evidence>
<evidence type="ECO:0000256" key="5">
    <source>
        <dbReference type="SAM" id="MobiDB-lite"/>
    </source>
</evidence>
<evidence type="ECO:0000305" key="6"/>
<comment type="catalytic activity">
    <reaction evidence="4">
        <text>L-tyrosyl-[protein] + ATP = O-phospho-L-tyrosyl-[protein] + ADP + H(+)</text>
        <dbReference type="Rhea" id="RHEA:10596"/>
        <dbReference type="Rhea" id="RHEA-COMP:10136"/>
        <dbReference type="Rhea" id="RHEA-COMP:20101"/>
        <dbReference type="ChEBI" id="CHEBI:15378"/>
        <dbReference type="ChEBI" id="CHEBI:30616"/>
        <dbReference type="ChEBI" id="CHEBI:46858"/>
        <dbReference type="ChEBI" id="CHEBI:61978"/>
        <dbReference type="ChEBI" id="CHEBI:456216"/>
        <dbReference type="EC" id="2.7.10.1"/>
    </reaction>
</comment>
<comment type="subcellular location">
    <subcellularLocation>
        <location evidence="6">Membrane</location>
        <topology evidence="6">Single-pass type I membrane protein</topology>
    </subcellularLocation>
</comment>
<comment type="similarity">
    <text evidence="3">Belongs to the protein kinase superfamily. Tyr protein kinase family. Fibroblast growth factor receptor subfamily.</text>
</comment>
<dbReference type="EC" id="2.7.10.1"/>
<dbReference type="EMBL" id="AE014297">
    <property type="protein sequence ID" value="AAF56414.2"/>
    <property type="molecule type" value="Genomic_DNA"/>
</dbReference>
<dbReference type="EMBL" id="AY070958">
    <property type="protein sequence ID" value="AAL48580.1"/>
    <property type="molecule type" value="mRNA"/>
</dbReference>
<dbReference type="EMBL" id="BT001586">
    <property type="protein sequence ID" value="AAN71341.1"/>
    <property type="molecule type" value="mRNA"/>
</dbReference>
<dbReference type="EMBL" id="BT001657">
    <property type="protein sequence ID" value="AAN71412.1"/>
    <property type="molecule type" value="mRNA"/>
</dbReference>
<dbReference type="EMBL" id="AJ002910">
    <property type="protein sequence ID" value="CAA05745.1"/>
    <property type="molecule type" value="Genomic_DNA"/>
</dbReference>
<dbReference type="RefSeq" id="NP_651349.1">
    <property type="nucleotide sequence ID" value="NM_143092.3"/>
</dbReference>
<dbReference type="SMR" id="Q9VBW3"/>
<dbReference type="BioGRID" id="67946">
    <property type="interactions" value="4"/>
</dbReference>
<dbReference type="FunCoup" id="Q9VBW3">
    <property type="interactions" value="9"/>
</dbReference>
<dbReference type="IntAct" id="Q9VBW3">
    <property type="interactions" value="7"/>
</dbReference>
<dbReference type="STRING" id="7227.FBpp0084248"/>
<dbReference type="GlyCosmos" id="Q9VBW3">
    <property type="glycosylation" value="7 sites, No reported glycans"/>
</dbReference>
<dbReference type="GlyGen" id="Q9VBW3">
    <property type="glycosylation" value="7 sites"/>
</dbReference>
<dbReference type="PaxDb" id="7227-FBpp0084248"/>
<dbReference type="DNASU" id="43026"/>
<dbReference type="EnsemblMetazoa" id="FBtr0084874">
    <property type="protein sequence ID" value="FBpp0084248"/>
    <property type="gene ID" value="FBgn0022800"/>
</dbReference>
<dbReference type="GeneID" id="43026"/>
<dbReference type="KEGG" id="dme:Dmel_CG10244"/>
<dbReference type="AGR" id="FB:FBgn0022800"/>
<dbReference type="CTD" id="43026"/>
<dbReference type="FlyBase" id="FBgn0022800">
    <property type="gene designation" value="Cad96Ca"/>
</dbReference>
<dbReference type="VEuPathDB" id="VectorBase:FBgn0022800"/>
<dbReference type="eggNOG" id="KOG0200">
    <property type="taxonomic scope" value="Eukaryota"/>
</dbReference>
<dbReference type="GeneTree" id="ENSGT00940000166715"/>
<dbReference type="HOGENOM" id="CLU_020235_0_0_1"/>
<dbReference type="InParanoid" id="Q9VBW3"/>
<dbReference type="OMA" id="WDKDPAC"/>
<dbReference type="OrthoDB" id="3256376at2759"/>
<dbReference type="PhylomeDB" id="Q9VBW3"/>
<dbReference type="SignaLink" id="Q9VBW3"/>
<dbReference type="BioGRID-ORCS" id="43026">
    <property type="hits" value="0 hits in 3 CRISPR screens"/>
</dbReference>
<dbReference type="GenomeRNAi" id="43026"/>
<dbReference type="PRO" id="PR:Q9VBW3"/>
<dbReference type="Proteomes" id="UP000000803">
    <property type="component" value="Chromosome 3R"/>
</dbReference>
<dbReference type="Bgee" id="FBgn0022800">
    <property type="expression patterns" value="Expressed in epithelial cell in haltere and 87 other cell types or tissues"/>
</dbReference>
<dbReference type="GO" id="GO:0045177">
    <property type="term" value="C:apical part of cell"/>
    <property type="evidence" value="ECO:0000314"/>
    <property type="project" value="FlyBase"/>
</dbReference>
<dbReference type="GO" id="GO:0005886">
    <property type="term" value="C:plasma membrane"/>
    <property type="evidence" value="ECO:0000250"/>
    <property type="project" value="FlyBase"/>
</dbReference>
<dbReference type="GO" id="GO:0043235">
    <property type="term" value="C:receptor complex"/>
    <property type="evidence" value="ECO:0000318"/>
    <property type="project" value="GO_Central"/>
</dbReference>
<dbReference type="GO" id="GO:0005524">
    <property type="term" value="F:ATP binding"/>
    <property type="evidence" value="ECO:0007669"/>
    <property type="project" value="UniProtKB-KW"/>
</dbReference>
<dbReference type="GO" id="GO:0005509">
    <property type="term" value="F:calcium ion binding"/>
    <property type="evidence" value="ECO:0007669"/>
    <property type="project" value="InterPro"/>
</dbReference>
<dbReference type="GO" id="GO:0004713">
    <property type="term" value="F:protein tyrosine kinase activity"/>
    <property type="evidence" value="ECO:0000314"/>
    <property type="project" value="FlyBase"/>
</dbReference>
<dbReference type="GO" id="GO:0004714">
    <property type="term" value="F:transmembrane receptor protein tyrosine kinase activity"/>
    <property type="evidence" value="ECO:0000318"/>
    <property type="project" value="GO_Central"/>
</dbReference>
<dbReference type="GO" id="GO:0016339">
    <property type="term" value="P:calcium-dependent cell-cell adhesion via plasma membrane cell adhesion molecules"/>
    <property type="evidence" value="ECO:0000250"/>
    <property type="project" value="FlyBase"/>
</dbReference>
<dbReference type="GO" id="GO:0007169">
    <property type="term" value="P:cell surface receptor protein tyrosine kinase signaling pathway"/>
    <property type="evidence" value="ECO:0000318"/>
    <property type="project" value="GO_Central"/>
</dbReference>
<dbReference type="GO" id="GO:0007030">
    <property type="term" value="P:Golgi organization"/>
    <property type="evidence" value="ECO:0000315"/>
    <property type="project" value="FlyBase"/>
</dbReference>
<dbReference type="GO" id="GO:0007156">
    <property type="term" value="P:homophilic cell adhesion via plasma membrane adhesion molecules"/>
    <property type="evidence" value="ECO:0007669"/>
    <property type="project" value="InterPro"/>
</dbReference>
<dbReference type="GO" id="GO:0045792">
    <property type="term" value="P:negative regulation of cell size"/>
    <property type="evidence" value="ECO:0000315"/>
    <property type="project" value="FlyBase"/>
</dbReference>
<dbReference type="GO" id="GO:0051897">
    <property type="term" value="P:positive regulation of phosphatidylinositol 3-kinase/protein kinase B signal transduction"/>
    <property type="evidence" value="ECO:0000315"/>
    <property type="project" value="FlyBase"/>
</dbReference>
<dbReference type="GO" id="GO:0090303">
    <property type="term" value="P:positive regulation of wound healing"/>
    <property type="evidence" value="ECO:0000315"/>
    <property type="project" value="FlyBase"/>
</dbReference>
<dbReference type="GO" id="GO:0006468">
    <property type="term" value="P:protein phosphorylation"/>
    <property type="evidence" value="ECO:0000303"/>
    <property type="project" value="UniProtKB"/>
</dbReference>
<dbReference type="GO" id="GO:0042060">
    <property type="term" value="P:wound healing"/>
    <property type="evidence" value="ECO:0000270"/>
    <property type="project" value="FlyBase"/>
</dbReference>
<dbReference type="CDD" id="cd11304">
    <property type="entry name" value="Cadherin_repeat"/>
    <property type="match status" value="1"/>
</dbReference>
<dbReference type="CDD" id="cd00192">
    <property type="entry name" value="PTKc"/>
    <property type="match status" value="1"/>
</dbReference>
<dbReference type="FunFam" id="1.10.510.10:FF:000190">
    <property type="entry name" value="Proto-oncogene tyrosine-protein kinase receptor Ret"/>
    <property type="match status" value="1"/>
</dbReference>
<dbReference type="FunFam" id="3.30.200.20:FF:000678">
    <property type="entry name" value="Tyrosine kinase receptor"/>
    <property type="match status" value="1"/>
</dbReference>
<dbReference type="FunFam" id="2.60.40.60:FF:000313">
    <property type="entry name" value="Tyrosine kinase receptor Cad96Ca"/>
    <property type="match status" value="1"/>
</dbReference>
<dbReference type="Gene3D" id="2.60.40.60">
    <property type="entry name" value="Cadherins"/>
    <property type="match status" value="1"/>
</dbReference>
<dbReference type="Gene3D" id="3.30.200.20">
    <property type="entry name" value="Phosphorylase Kinase, domain 1"/>
    <property type="match status" value="1"/>
</dbReference>
<dbReference type="Gene3D" id="1.10.510.10">
    <property type="entry name" value="Transferase(Phosphotransferase) domain 1"/>
    <property type="match status" value="1"/>
</dbReference>
<dbReference type="InterPro" id="IPR002126">
    <property type="entry name" value="Cadherin-like_dom"/>
</dbReference>
<dbReference type="InterPro" id="IPR015919">
    <property type="entry name" value="Cadherin-like_sf"/>
</dbReference>
<dbReference type="InterPro" id="IPR011009">
    <property type="entry name" value="Kinase-like_dom_sf"/>
</dbReference>
<dbReference type="InterPro" id="IPR000719">
    <property type="entry name" value="Prot_kinase_dom"/>
</dbReference>
<dbReference type="InterPro" id="IPR017441">
    <property type="entry name" value="Protein_kinase_ATP_BS"/>
</dbReference>
<dbReference type="InterPro" id="IPR050122">
    <property type="entry name" value="RTK"/>
</dbReference>
<dbReference type="InterPro" id="IPR001245">
    <property type="entry name" value="Ser-Thr/Tyr_kinase_cat_dom"/>
</dbReference>
<dbReference type="InterPro" id="IPR008266">
    <property type="entry name" value="Tyr_kinase_AS"/>
</dbReference>
<dbReference type="InterPro" id="IPR020635">
    <property type="entry name" value="Tyr_kinase_cat_dom"/>
</dbReference>
<dbReference type="PANTHER" id="PTHR24416:SF621">
    <property type="entry name" value="TYROSINE KINASE RECEPTOR CAD96CA"/>
    <property type="match status" value="1"/>
</dbReference>
<dbReference type="PANTHER" id="PTHR24416">
    <property type="entry name" value="TYROSINE-PROTEIN KINASE RECEPTOR"/>
    <property type="match status" value="1"/>
</dbReference>
<dbReference type="Pfam" id="PF07714">
    <property type="entry name" value="PK_Tyr_Ser-Thr"/>
    <property type="match status" value="1"/>
</dbReference>
<dbReference type="PRINTS" id="PR00109">
    <property type="entry name" value="TYRKINASE"/>
</dbReference>
<dbReference type="SMART" id="SM00112">
    <property type="entry name" value="CA"/>
    <property type="match status" value="1"/>
</dbReference>
<dbReference type="SMART" id="SM00219">
    <property type="entry name" value="TyrKc"/>
    <property type="match status" value="1"/>
</dbReference>
<dbReference type="SUPFAM" id="SSF49313">
    <property type="entry name" value="Cadherin-like"/>
    <property type="match status" value="1"/>
</dbReference>
<dbReference type="SUPFAM" id="SSF56112">
    <property type="entry name" value="Protein kinase-like (PK-like)"/>
    <property type="match status" value="1"/>
</dbReference>
<dbReference type="PROSITE" id="PS50268">
    <property type="entry name" value="CADHERIN_2"/>
    <property type="match status" value="1"/>
</dbReference>
<dbReference type="PROSITE" id="PS00107">
    <property type="entry name" value="PROTEIN_KINASE_ATP"/>
    <property type="match status" value="1"/>
</dbReference>
<dbReference type="PROSITE" id="PS50011">
    <property type="entry name" value="PROTEIN_KINASE_DOM"/>
    <property type="match status" value="1"/>
</dbReference>
<dbReference type="PROSITE" id="PS00109">
    <property type="entry name" value="PROTEIN_KINASE_TYR"/>
    <property type="match status" value="1"/>
</dbReference>
<protein>
    <recommendedName>
        <fullName>Tyrosine kinase receptor Cad96Ca</fullName>
        <ecNumber>2.7.10.1</ecNumber>
    </recommendedName>
    <alternativeName>
        <fullName>Cadherin-96Ca</fullName>
    </alternativeName>
    <alternativeName>
        <fullName>Tyrosine kinase receptor HD-14</fullName>
    </alternativeName>
</protein>
<organism>
    <name type="scientific">Drosophila melanogaster</name>
    <name type="common">Fruit fly</name>
    <dbReference type="NCBI Taxonomy" id="7227"/>
    <lineage>
        <taxon>Eukaryota</taxon>
        <taxon>Metazoa</taxon>
        <taxon>Ecdysozoa</taxon>
        <taxon>Arthropoda</taxon>
        <taxon>Hexapoda</taxon>
        <taxon>Insecta</taxon>
        <taxon>Pterygota</taxon>
        <taxon>Neoptera</taxon>
        <taxon>Endopterygota</taxon>
        <taxon>Diptera</taxon>
        <taxon>Brachycera</taxon>
        <taxon>Muscomorpha</taxon>
        <taxon>Ephydroidea</taxon>
        <taxon>Drosophilidae</taxon>
        <taxon>Drosophila</taxon>
        <taxon>Sophophora</taxon>
    </lineage>
</organism>
<sequence length="773" mass="86220">MVYHHHNHESRIIHCRKQLTSWRRRSLLLTIIVVTATVVSLISQEAEAHNQNAPPILYVRERNWRISETEKVGQIIDRVRAEDPDGDDLIFGIEPRFSLPGGENDASPPEKIPFQIDRETGVVTLNESLAGRAGQNFLIYITVTDGSYTAKNEVFINILGERENSSGYRPQTSISNVVHNISQFLPRFDQLPGVQSIRNGLPNSRPGGWYPPVPQNNIFGPPPFGNNYPPPPPNIPGVRGEQSGEEEQPDEEVTPTTPVRISSTTPKSRTKLTPITANNSTRVESAIPAETTTPSGGHHNNSSSPITIFSLKSGTIPIVVTVGGFFVAIAVLLAYLCRRRLCAISRTLKKTKEKEELAKKSNQSQLSSTLTDDSRNSMVMQQWQGPVAFANRYVPWERDQQMGIATSQLSTGVTNGGVSSPGVPSPGTGEPGSNLGPGCLTGGAGSSGAPENAFAGEANCDRWEFPRYRLKFFNILGEGAFGQVWRCEATNINGNEGITTVAVKTLKESATEVDRKDLLSELEVMKSLEPHINVVHLLGCCTDKDPTFVILEYVNRGKLQTYLRSSRAERHYGNTHGKSNVLTSCDLTSFMYQVAKGMDYLTSRGIIHRDLAARNILITDDHTCKVADFGFARDVITSKIYERKSEGKLPIRWMATESLYDNIFSVKSDIWSFGILMWEIVTLGSTPYPGISAADVMRKVRDGYRLEKPEHCRRELYNIMYYCWSHDPQERPLFAEIIQMLDKLLHTEMDYIELERFPDHNYYNIVSLSGEKL</sequence>
<proteinExistence type="evidence at transcript level"/>
<gene>
    <name type="primary">Cad96Ca</name>
    <name type="synonym">HD-14</name>
    <name type="ORF">CG10244</name>
</gene>
<keyword id="KW-0067">ATP-binding</keyword>
<keyword id="KW-0325">Glycoprotein</keyword>
<keyword id="KW-0418">Kinase</keyword>
<keyword id="KW-0472">Membrane</keyword>
<keyword id="KW-0547">Nucleotide-binding</keyword>
<keyword id="KW-0675">Receptor</keyword>
<keyword id="KW-1185">Reference proteome</keyword>
<keyword id="KW-0732">Signal</keyword>
<keyword id="KW-0808">Transferase</keyword>
<keyword id="KW-0812">Transmembrane</keyword>
<keyword id="KW-1133">Transmembrane helix</keyword>
<keyword id="KW-0829">Tyrosine-protein kinase</keyword>
<feature type="signal peptide" evidence="1">
    <location>
        <begin position="1"/>
        <end position="48"/>
    </location>
</feature>
<feature type="chain" id="PRO_0000016797" description="Tyrosine kinase receptor Cad96Ca">
    <location>
        <begin position="49"/>
        <end position="773"/>
    </location>
</feature>
<feature type="topological domain" description="Extracellular" evidence="1">
    <location>
        <begin position="49"/>
        <end position="315"/>
    </location>
</feature>
<feature type="transmembrane region" description="Helical" evidence="1">
    <location>
        <begin position="316"/>
        <end position="336"/>
    </location>
</feature>
<feature type="topological domain" description="Cytoplasmic" evidence="1">
    <location>
        <begin position="337"/>
        <end position="773"/>
    </location>
</feature>
<feature type="domain" description="Cadherin" evidence="2">
    <location>
        <begin position="58"/>
        <end position="172"/>
    </location>
</feature>
<feature type="domain" description="Protein kinase" evidence="3">
    <location>
        <begin position="470"/>
        <end position="749"/>
    </location>
</feature>
<feature type="region of interest" description="Disordered" evidence="5">
    <location>
        <begin position="196"/>
        <end position="302"/>
    </location>
</feature>
<feature type="region of interest" description="Disordered" evidence="5">
    <location>
        <begin position="352"/>
        <end position="373"/>
    </location>
</feature>
<feature type="region of interest" description="Disordered" evidence="5">
    <location>
        <begin position="411"/>
        <end position="447"/>
    </location>
</feature>
<feature type="compositionally biased region" description="Pro residues" evidence="5">
    <location>
        <begin position="209"/>
        <end position="235"/>
    </location>
</feature>
<feature type="compositionally biased region" description="Acidic residues" evidence="5">
    <location>
        <begin position="243"/>
        <end position="253"/>
    </location>
</feature>
<feature type="compositionally biased region" description="Polar residues" evidence="5">
    <location>
        <begin position="254"/>
        <end position="283"/>
    </location>
</feature>
<feature type="compositionally biased region" description="Polar residues" evidence="5">
    <location>
        <begin position="290"/>
        <end position="302"/>
    </location>
</feature>
<feature type="compositionally biased region" description="Polar residues" evidence="5">
    <location>
        <begin position="361"/>
        <end position="373"/>
    </location>
</feature>
<feature type="compositionally biased region" description="Low complexity" evidence="5">
    <location>
        <begin position="411"/>
        <end position="433"/>
    </location>
</feature>
<feature type="active site" description="Proton acceptor" evidence="3 4">
    <location>
        <position position="610"/>
    </location>
</feature>
<feature type="binding site" evidence="3">
    <location>
        <begin position="476"/>
        <end position="484"/>
    </location>
    <ligand>
        <name>ATP</name>
        <dbReference type="ChEBI" id="CHEBI:30616"/>
    </ligand>
</feature>
<feature type="binding site" evidence="3">
    <location>
        <position position="504"/>
    </location>
    <ligand>
        <name>ATP</name>
        <dbReference type="ChEBI" id="CHEBI:30616"/>
    </ligand>
</feature>
<feature type="glycosylation site" description="N-linked (GlcNAc...) asparagine" evidence="1">
    <location>
        <position position="126"/>
    </location>
</feature>
<feature type="glycosylation site" description="N-linked (GlcNAc...) asparagine" evidence="1">
    <location>
        <position position="164"/>
    </location>
</feature>
<feature type="glycosylation site" description="N-linked (GlcNAc...) asparagine" evidence="1">
    <location>
        <position position="180"/>
    </location>
</feature>
<feature type="glycosylation site" description="N-linked (GlcNAc...) asparagine" evidence="1">
    <location>
        <position position="278"/>
    </location>
</feature>
<feature type="glycosylation site" description="N-linked (GlcNAc...) asparagine" evidence="1">
    <location>
        <position position="279"/>
    </location>
</feature>
<feature type="glycosylation site" description="N-linked (GlcNAc...) asparagine" evidence="1">
    <location>
        <position position="300"/>
    </location>
</feature>
<feature type="glycosylation site" description="N-linked (GlcNAc...) asparagine" evidence="1">
    <location>
        <position position="301"/>
    </location>
</feature>
<accession>Q9VBW3</accession>
<accession>O18368</accession>
<accession>Q8SZC9</accession>
<accession>Q9VBW2</accession>
<reference evidence="6" key="1">
    <citation type="journal article" date="2000" name="Science">
        <title>The genome sequence of Drosophila melanogaster.</title>
        <authorList>
            <person name="Adams M.D."/>
            <person name="Celniker S.E."/>
            <person name="Holt R.A."/>
            <person name="Evans C.A."/>
            <person name="Gocayne J.D."/>
            <person name="Amanatides P.G."/>
            <person name="Scherer S.E."/>
            <person name="Li P.W."/>
            <person name="Hoskins R.A."/>
            <person name="Galle R.F."/>
            <person name="George R.A."/>
            <person name="Lewis S.E."/>
            <person name="Richards S."/>
            <person name="Ashburner M."/>
            <person name="Henderson S.N."/>
            <person name="Sutton G.G."/>
            <person name="Wortman J.R."/>
            <person name="Yandell M.D."/>
            <person name="Zhang Q."/>
            <person name="Chen L.X."/>
            <person name="Brandon R.C."/>
            <person name="Rogers Y.-H.C."/>
            <person name="Blazej R.G."/>
            <person name="Champe M."/>
            <person name="Pfeiffer B.D."/>
            <person name="Wan K.H."/>
            <person name="Doyle C."/>
            <person name="Baxter E.G."/>
            <person name="Helt G."/>
            <person name="Nelson C.R."/>
            <person name="Miklos G.L.G."/>
            <person name="Abril J.F."/>
            <person name="Agbayani A."/>
            <person name="An H.-J."/>
            <person name="Andrews-Pfannkoch C."/>
            <person name="Baldwin D."/>
            <person name="Ballew R.M."/>
            <person name="Basu A."/>
            <person name="Baxendale J."/>
            <person name="Bayraktaroglu L."/>
            <person name="Beasley E.M."/>
            <person name="Beeson K.Y."/>
            <person name="Benos P.V."/>
            <person name="Berman B.P."/>
            <person name="Bhandari D."/>
            <person name="Bolshakov S."/>
            <person name="Borkova D."/>
            <person name="Botchan M.R."/>
            <person name="Bouck J."/>
            <person name="Brokstein P."/>
            <person name="Brottier P."/>
            <person name="Burtis K.C."/>
            <person name="Busam D.A."/>
            <person name="Butler H."/>
            <person name="Cadieu E."/>
            <person name="Center A."/>
            <person name="Chandra I."/>
            <person name="Cherry J.M."/>
            <person name="Cawley S."/>
            <person name="Dahlke C."/>
            <person name="Davenport L.B."/>
            <person name="Davies P."/>
            <person name="de Pablos B."/>
            <person name="Delcher A."/>
            <person name="Deng Z."/>
            <person name="Mays A.D."/>
            <person name="Dew I."/>
            <person name="Dietz S.M."/>
            <person name="Dodson K."/>
            <person name="Doup L.E."/>
            <person name="Downes M."/>
            <person name="Dugan-Rocha S."/>
            <person name="Dunkov B.C."/>
            <person name="Dunn P."/>
            <person name="Durbin K.J."/>
            <person name="Evangelista C.C."/>
            <person name="Ferraz C."/>
            <person name="Ferriera S."/>
            <person name="Fleischmann W."/>
            <person name="Fosler C."/>
            <person name="Gabrielian A.E."/>
            <person name="Garg N.S."/>
            <person name="Gelbart W.M."/>
            <person name="Glasser K."/>
            <person name="Glodek A."/>
            <person name="Gong F."/>
            <person name="Gorrell J.H."/>
            <person name="Gu Z."/>
            <person name="Guan P."/>
            <person name="Harris M."/>
            <person name="Harris N.L."/>
            <person name="Harvey D.A."/>
            <person name="Heiman T.J."/>
            <person name="Hernandez J.R."/>
            <person name="Houck J."/>
            <person name="Hostin D."/>
            <person name="Houston K.A."/>
            <person name="Howland T.J."/>
            <person name="Wei M.-H."/>
            <person name="Ibegwam C."/>
            <person name="Jalali M."/>
            <person name="Kalush F."/>
            <person name="Karpen G.H."/>
            <person name="Ke Z."/>
            <person name="Kennison J.A."/>
            <person name="Ketchum K.A."/>
            <person name="Kimmel B.E."/>
            <person name="Kodira C.D."/>
            <person name="Kraft C.L."/>
            <person name="Kravitz S."/>
            <person name="Kulp D."/>
            <person name="Lai Z."/>
            <person name="Lasko P."/>
            <person name="Lei Y."/>
            <person name="Levitsky A.A."/>
            <person name="Li J.H."/>
            <person name="Li Z."/>
            <person name="Liang Y."/>
            <person name="Lin X."/>
            <person name="Liu X."/>
            <person name="Mattei B."/>
            <person name="McIntosh T.C."/>
            <person name="McLeod M.P."/>
            <person name="McPherson D."/>
            <person name="Merkulov G."/>
            <person name="Milshina N.V."/>
            <person name="Mobarry C."/>
            <person name="Morris J."/>
            <person name="Moshrefi A."/>
            <person name="Mount S.M."/>
            <person name="Moy M."/>
            <person name="Murphy B."/>
            <person name="Murphy L."/>
            <person name="Muzny D.M."/>
            <person name="Nelson D.L."/>
            <person name="Nelson D.R."/>
            <person name="Nelson K.A."/>
            <person name="Nixon K."/>
            <person name="Nusskern D.R."/>
            <person name="Pacleb J.M."/>
            <person name="Palazzolo M."/>
            <person name="Pittman G.S."/>
            <person name="Pan S."/>
            <person name="Pollard J."/>
            <person name="Puri V."/>
            <person name="Reese M.G."/>
            <person name="Reinert K."/>
            <person name="Remington K."/>
            <person name="Saunders R.D.C."/>
            <person name="Scheeler F."/>
            <person name="Shen H."/>
            <person name="Shue B.C."/>
            <person name="Siden-Kiamos I."/>
            <person name="Simpson M."/>
            <person name="Skupski M.P."/>
            <person name="Smith T.J."/>
            <person name="Spier E."/>
            <person name="Spradling A.C."/>
            <person name="Stapleton M."/>
            <person name="Strong R."/>
            <person name="Sun E."/>
            <person name="Svirskas R."/>
            <person name="Tector C."/>
            <person name="Turner R."/>
            <person name="Venter E."/>
            <person name="Wang A.H."/>
            <person name="Wang X."/>
            <person name="Wang Z.-Y."/>
            <person name="Wassarman D.A."/>
            <person name="Weinstock G.M."/>
            <person name="Weissenbach J."/>
            <person name="Williams S.M."/>
            <person name="Woodage T."/>
            <person name="Worley K.C."/>
            <person name="Wu D."/>
            <person name="Yang S."/>
            <person name="Yao Q.A."/>
            <person name="Ye J."/>
            <person name="Yeh R.-F."/>
            <person name="Zaveri J.S."/>
            <person name="Zhan M."/>
            <person name="Zhang G."/>
            <person name="Zhao Q."/>
            <person name="Zheng L."/>
            <person name="Zheng X.H."/>
            <person name="Zhong F.N."/>
            <person name="Zhong W."/>
            <person name="Zhou X."/>
            <person name="Zhu S.C."/>
            <person name="Zhu X."/>
            <person name="Smith H.O."/>
            <person name="Gibbs R.A."/>
            <person name="Myers E.W."/>
            <person name="Rubin G.M."/>
            <person name="Venter J.C."/>
        </authorList>
    </citation>
    <scope>NUCLEOTIDE SEQUENCE [LARGE SCALE GENOMIC DNA]</scope>
    <source>
        <strain>Berkeley</strain>
    </source>
</reference>
<reference key="2">
    <citation type="journal article" date="2002" name="Genome Biol.">
        <title>Annotation of the Drosophila melanogaster euchromatic genome: a systematic review.</title>
        <authorList>
            <person name="Misra S."/>
            <person name="Crosby M.A."/>
            <person name="Mungall C.J."/>
            <person name="Matthews B.B."/>
            <person name="Campbell K.S."/>
            <person name="Hradecky P."/>
            <person name="Huang Y."/>
            <person name="Kaminker J.S."/>
            <person name="Millburn G.H."/>
            <person name="Prochnik S.E."/>
            <person name="Smith C.D."/>
            <person name="Tupy J.L."/>
            <person name="Whitfield E.J."/>
            <person name="Bayraktaroglu L."/>
            <person name="Berman B.P."/>
            <person name="Bettencourt B.R."/>
            <person name="Celniker S.E."/>
            <person name="de Grey A.D.N.J."/>
            <person name="Drysdale R.A."/>
            <person name="Harris N.L."/>
            <person name="Richter J."/>
            <person name="Russo S."/>
            <person name="Schroeder A.J."/>
            <person name="Shu S.Q."/>
            <person name="Stapleton M."/>
            <person name="Yamada C."/>
            <person name="Ashburner M."/>
            <person name="Gelbart W.M."/>
            <person name="Rubin G.M."/>
            <person name="Lewis S.E."/>
        </authorList>
    </citation>
    <scope>GENOME REANNOTATION</scope>
    <source>
        <strain>Berkeley</strain>
    </source>
</reference>
<reference key="3">
    <citation type="journal article" date="2002" name="Genome Biol.">
        <title>A Drosophila full-length cDNA resource.</title>
        <authorList>
            <person name="Stapleton M."/>
            <person name="Carlson J.W."/>
            <person name="Brokstein P."/>
            <person name="Yu C."/>
            <person name="Champe M."/>
            <person name="George R.A."/>
            <person name="Guarin H."/>
            <person name="Kronmiller B."/>
            <person name="Pacleb J.M."/>
            <person name="Park S."/>
            <person name="Wan K.H."/>
            <person name="Rubin G.M."/>
            <person name="Celniker S.E."/>
        </authorList>
    </citation>
    <scope>NUCLEOTIDE SEQUENCE [LARGE SCALE MRNA]</scope>
    <source>
        <strain>Berkeley</strain>
        <tissue>Embryo</tissue>
    </source>
</reference>
<reference evidence="6" key="4">
    <citation type="journal article" date="1998" name="Biochem. Biophys. Res. Commun.">
        <title>Sampling the genomic pool of protein tyrosine kinase genes using the polymerase chain reaction with genomic DNA.</title>
        <authorList>
            <person name="Oates A.C."/>
            <person name="Wollberg P."/>
            <person name="Achen M.G."/>
            <person name="Wilks A.F."/>
        </authorList>
    </citation>
    <scope>NUCLEOTIDE SEQUENCE OF 616-668</scope>
    <source>
        <tissue>Embryo</tissue>
    </source>
</reference>
<name>CAD96_DROME</name>